<reference key="1">
    <citation type="journal article" date="2004" name="Environ. Microbiol.">
        <title>The genome of Desulfotalea psychrophila, a sulfate-reducing bacterium from permanently cold Arctic sediments.</title>
        <authorList>
            <person name="Rabus R."/>
            <person name="Ruepp A."/>
            <person name="Frickey T."/>
            <person name="Rattei T."/>
            <person name="Fartmann B."/>
            <person name="Stark M."/>
            <person name="Bauer M."/>
            <person name="Zibat A."/>
            <person name="Lombardot T."/>
            <person name="Becker I."/>
            <person name="Amann J."/>
            <person name="Gellner K."/>
            <person name="Teeling H."/>
            <person name="Leuschner W.D."/>
            <person name="Gloeckner F.-O."/>
            <person name="Lupas A.N."/>
            <person name="Amann R."/>
            <person name="Klenk H.-P."/>
        </authorList>
    </citation>
    <scope>NUCLEOTIDE SEQUENCE [LARGE SCALE GENOMIC DNA]</scope>
    <source>
        <strain>DSM 12343 / LSv54</strain>
    </source>
</reference>
<proteinExistence type="inferred from homology"/>
<name>KDSA_DESPS</name>
<keyword id="KW-0963">Cytoplasm</keyword>
<keyword id="KW-0448">Lipopolysaccharide biosynthesis</keyword>
<keyword id="KW-1185">Reference proteome</keyword>
<keyword id="KW-0808">Transferase</keyword>
<evidence type="ECO:0000255" key="1">
    <source>
        <dbReference type="HAMAP-Rule" id="MF_00056"/>
    </source>
</evidence>
<dbReference type="EC" id="2.5.1.55" evidence="1"/>
<dbReference type="EMBL" id="CR522870">
    <property type="protein sequence ID" value="CAG35494.1"/>
    <property type="molecule type" value="Genomic_DNA"/>
</dbReference>
<dbReference type="RefSeq" id="WP_011188010.1">
    <property type="nucleotide sequence ID" value="NC_006138.1"/>
</dbReference>
<dbReference type="SMR" id="Q6AQ79"/>
<dbReference type="STRING" id="177439.DP0765"/>
<dbReference type="KEGG" id="dps:DP0765"/>
<dbReference type="eggNOG" id="COG2877">
    <property type="taxonomic scope" value="Bacteria"/>
</dbReference>
<dbReference type="HOGENOM" id="CLU_036666_0_0_7"/>
<dbReference type="OrthoDB" id="9802281at2"/>
<dbReference type="UniPathway" id="UPA00030"/>
<dbReference type="UniPathway" id="UPA00357">
    <property type="reaction ID" value="UER00474"/>
</dbReference>
<dbReference type="Proteomes" id="UP000000602">
    <property type="component" value="Chromosome"/>
</dbReference>
<dbReference type="GO" id="GO:0005737">
    <property type="term" value="C:cytoplasm"/>
    <property type="evidence" value="ECO:0007669"/>
    <property type="project" value="UniProtKB-SubCell"/>
</dbReference>
<dbReference type="GO" id="GO:0008676">
    <property type="term" value="F:3-deoxy-8-phosphooctulonate synthase activity"/>
    <property type="evidence" value="ECO:0007669"/>
    <property type="project" value="UniProtKB-UniRule"/>
</dbReference>
<dbReference type="GO" id="GO:0019294">
    <property type="term" value="P:keto-3-deoxy-D-manno-octulosonic acid biosynthetic process"/>
    <property type="evidence" value="ECO:0007669"/>
    <property type="project" value="UniProtKB-UniRule"/>
</dbReference>
<dbReference type="Gene3D" id="3.20.20.70">
    <property type="entry name" value="Aldolase class I"/>
    <property type="match status" value="1"/>
</dbReference>
<dbReference type="HAMAP" id="MF_00056">
    <property type="entry name" value="KDO8P_synth"/>
    <property type="match status" value="1"/>
</dbReference>
<dbReference type="InterPro" id="IPR013785">
    <property type="entry name" value="Aldolase_TIM"/>
</dbReference>
<dbReference type="InterPro" id="IPR006218">
    <property type="entry name" value="DAHP1/KDSA"/>
</dbReference>
<dbReference type="InterPro" id="IPR006269">
    <property type="entry name" value="KDO8P_synthase"/>
</dbReference>
<dbReference type="NCBIfam" id="TIGR01362">
    <property type="entry name" value="KDO8P_synth"/>
    <property type="match status" value="1"/>
</dbReference>
<dbReference type="NCBIfam" id="NF003543">
    <property type="entry name" value="PRK05198.1"/>
    <property type="match status" value="1"/>
</dbReference>
<dbReference type="PANTHER" id="PTHR21057">
    <property type="entry name" value="PHOSPHO-2-DEHYDRO-3-DEOXYHEPTONATE ALDOLASE"/>
    <property type="match status" value="1"/>
</dbReference>
<dbReference type="Pfam" id="PF00793">
    <property type="entry name" value="DAHP_synth_1"/>
    <property type="match status" value="1"/>
</dbReference>
<dbReference type="SUPFAM" id="SSF51569">
    <property type="entry name" value="Aldolase"/>
    <property type="match status" value="1"/>
</dbReference>
<gene>
    <name evidence="1" type="primary">kdsA</name>
    <name type="ordered locus">DP0765</name>
</gene>
<accession>Q6AQ79</accession>
<sequence length="280" mass="29725">MTVVTPVAVAQPNGSDILVGSGQPLLLIGGPCSLESEQLGREVAETVSKICKKLGISYVFKASFDKANRTSISSYRGPGLKKGLASLARIREDLQVPVISDIHDISQVGPAAEVLDIIQIPAFLCRQTDLLVAAAKSGKPVNVKKGQFVSPWDMENAIGKLRDAGSDKVMLVERGACFGYNNLVVDMRSLPVMRSFNCPVIYDATHSVQLPGGAGGSSSGQREFIEPLSKAAIAAGIDGLFMEIHPDPDKALCDGPNSIALDQVEELLTKLVKVRAAVEE</sequence>
<comment type="catalytic activity">
    <reaction evidence="1">
        <text>D-arabinose 5-phosphate + phosphoenolpyruvate + H2O = 3-deoxy-alpha-D-manno-2-octulosonate-8-phosphate + phosphate</text>
        <dbReference type="Rhea" id="RHEA:14053"/>
        <dbReference type="ChEBI" id="CHEBI:15377"/>
        <dbReference type="ChEBI" id="CHEBI:43474"/>
        <dbReference type="ChEBI" id="CHEBI:57693"/>
        <dbReference type="ChEBI" id="CHEBI:58702"/>
        <dbReference type="ChEBI" id="CHEBI:85985"/>
        <dbReference type="EC" id="2.5.1.55"/>
    </reaction>
</comment>
<comment type="pathway">
    <text evidence="1">Carbohydrate biosynthesis; 3-deoxy-D-manno-octulosonate biosynthesis; 3-deoxy-D-manno-octulosonate from D-ribulose 5-phosphate: step 2/3.</text>
</comment>
<comment type="pathway">
    <text evidence="1">Bacterial outer membrane biogenesis; lipopolysaccharide biosynthesis.</text>
</comment>
<comment type="subcellular location">
    <subcellularLocation>
        <location evidence="1">Cytoplasm</location>
    </subcellularLocation>
</comment>
<comment type="similarity">
    <text evidence="1">Belongs to the KdsA family.</text>
</comment>
<feature type="chain" id="PRO_0000187122" description="2-dehydro-3-deoxyphosphooctonate aldolase">
    <location>
        <begin position="1"/>
        <end position="280"/>
    </location>
</feature>
<protein>
    <recommendedName>
        <fullName evidence="1">2-dehydro-3-deoxyphosphooctonate aldolase</fullName>
        <ecNumber evidence="1">2.5.1.55</ecNumber>
    </recommendedName>
    <alternativeName>
        <fullName evidence="1">3-deoxy-D-manno-octulosonic acid 8-phosphate synthase</fullName>
    </alternativeName>
    <alternativeName>
        <fullName evidence="1">KDO-8-phosphate synthase</fullName>
        <shortName evidence="1">KDO 8-P synthase</shortName>
        <shortName evidence="1">KDOPS</shortName>
    </alternativeName>
    <alternativeName>
        <fullName evidence="1">Phospho-2-dehydro-3-deoxyoctonate aldolase</fullName>
    </alternativeName>
</protein>
<organism>
    <name type="scientific">Desulfotalea psychrophila (strain LSv54 / DSM 12343)</name>
    <dbReference type="NCBI Taxonomy" id="177439"/>
    <lineage>
        <taxon>Bacteria</taxon>
        <taxon>Pseudomonadati</taxon>
        <taxon>Thermodesulfobacteriota</taxon>
        <taxon>Desulfobulbia</taxon>
        <taxon>Desulfobulbales</taxon>
        <taxon>Desulfocapsaceae</taxon>
        <taxon>Desulfotalea</taxon>
    </lineage>
</organism>